<comment type="function">
    <text evidence="1 4">Proton-conducting pore forming subunit of the V0 complex of vacuolar(H+)-ATPase (V-ATPase), a multisubunit enzyme composed of a peripheral complex (V1) that hydrolyzes ATP and a membrane integral complex (V0) that translocates protons (By similarity). V-ATPase is responsible for acidifying and maintaining the pH of intracellular compartments and in some cell types, is targeted to the plasma membrane, where it is responsible for acidifying the extracellular environment (PubMed:32269334). In enterocytes, acts as part of a pHCl-2 sensory pathway which mediates Tor-dependent larval growth and metabolism in response to zinc availability (PubMed:32269334). Likely acts in maintaining enterocyte lysosomal acidification which consequently promotes Tor activation at the lysosome membrane (PubMed:32269334).</text>
</comment>
<comment type="subunit">
    <text evidence="1">V-ATPase is a heteromultimeric enzyme made up of two complexes: the ATP-hydrolytic V1 complex and the proton translocation V0 complex (By similarity). The V1 complex consists of three catalytic AB heterodimers that form a heterohexamer, three peripheral stalks each consisting of EG heterodimers, one central rotor including subunits D and F, and the regulatory subunits C and H (By similarity). The proton translocation complex V0 consists of the proton transport subunit a, a ring of proteolipid subunits c9c'', rotary subunit d, subunits e and f, and the accessory subunits VhaAC45 and ATP6AP2 (By similarity).</text>
</comment>
<comment type="subcellular location">
    <subcellularLocation>
        <location evidence="3">Membrane</location>
        <topology evidence="3">Multi-pass membrane protein</topology>
    </subcellularLocation>
</comment>
<comment type="tissue specificity">
    <text evidence="4">Expressed in the larval middle mid-gut; predominantly in the copper cell region with lower levels of expression in the interstitial cells.</text>
</comment>
<comment type="disruption phenotype">
    <text evidence="4">RNAi-mediated knockdown specifically in pHCl-2 expressing enterocytes delays pupariation (PubMed:32269334). Knockdown in the intestinal copper cell region decreases intestinal acidity (PubMed:32269334).</text>
</comment>
<comment type="similarity">
    <text evidence="5">Belongs to the V-ATPase proteolipid subunit family.</text>
</comment>
<feature type="chain" id="PRO_0000071750" description="V-type proton ATPase 16 kDa proteolipid subunit c">
    <location>
        <begin position="1"/>
        <end position="159"/>
    </location>
</feature>
<feature type="topological domain" description="Lumenal" evidence="3">
    <location>
        <begin position="1"/>
        <end position="12"/>
    </location>
</feature>
<feature type="transmembrane region" description="Helical" evidence="3">
    <location>
        <begin position="13"/>
        <end position="35"/>
    </location>
</feature>
<feature type="topological domain" description="Cytoplasmic" evidence="3">
    <location>
        <begin position="36"/>
        <end position="57"/>
    </location>
</feature>
<feature type="transmembrane region" description="Helical" evidence="3">
    <location>
        <begin position="58"/>
        <end position="78"/>
    </location>
</feature>
<feature type="topological domain" description="Lumenal" evidence="3">
    <location>
        <begin position="79"/>
        <end position="96"/>
    </location>
</feature>
<feature type="transmembrane region" description="Helical" evidence="3">
    <location>
        <begin position="97"/>
        <end position="118"/>
    </location>
</feature>
<feature type="topological domain" description="Cytoplasmic" evidence="3">
    <location>
        <begin position="119"/>
        <end position="130"/>
    </location>
</feature>
<feature type="transmembrane region" description="Helical" evidence="3">
    <location>
        <begin position="131"/>
        <end position="156"/>
    </location>
</feature>
<feature type="topological domain" description="Lumenal" evidence="3">
    <location>
        <begin position="157"/>
        <end position="159"/>
    </location>
</feature>
<feature type="site" description="Essential for proton translocation" evidence="2">
    <location>
        <position position="143"/>
    </location>
</feature>
<organism>
    <name type="scientific">Drosophila melanogaster</name>
    <name type="common">Fruit fly</name>
    <dbReference type="NCBI Taxonomy" id="7227"/>
    <lineage>
        <taxon>Eukaryota</taxon>
        <taxon>Metazoa</taxon>
        <taxon>Ecdysozoa</taxon>
        <taxon>Arthropoda</taxon>
        <taxon>Hexapoda</taxon>
        <taxon>Insecta</taxon>
        <taxon>Pterygota</taxon>
        <taxon>Neoptera</taxon>
        <taxon>Endopterygota</taxon>
        <taxon>Diptera</taxon>
        <taxon>Brachycera</taxon>
        <taxon>Muscomorpha</taxon>
        <taxon>Ephydroidea</taxon>
        <taxon>Drosophilidae</taxon>
        <taxon>Drosophila</taxon>
        <taxon>Sophophora</taxon>
    </lineage>
</organism>
<reference key="1">
    <citation type="journal article" date="1990" name="Nucleic Acids Res.">
        <title>Sequence of a cDNA from Drosophila coding for the 16 kD proteolipid component of the vacuolar H(+)-ATPase.</title>
        <authorList>
            <person name="Meagher L."/>
            <person name="McLean P."/>
            <person name="Finbow M.E."/>
        </authorList>
    </citation>
    <scope>NUCLEOTIDE SEQUENCE [MRNA]</scope>
    <source>
        <tissue>Larva</tissue>
    </source>
</reference>
<reference key="2">
    <citation type="journal article" date="1994" name="J. Cell Sci.">
        <title>Evidence that the 16 kDa proteolipid (subunit c) of the vacuolar H(+)- ATPase and ductin from gap junctions are the same polypeptide in Drosophila and Manduca: molecular cloning of the Vha16k gene from Drosophila.</title>
        <authorList>
            <person name="Finbow M.E."/>
            <person name="Goodwin S.F."/>
            <person name="Meagher L."/>
            <person name="Lane N.J."/>
            <person name="Keen J."/>
            <person name="Findlay J.B.C."/>
            <person name="Kaiser K."/>
        </authorList>
    </citation>
    <scope>NUCLEOTIDE SEQUENCE [GENOMIC DNA]</scope>
    <source>
        <strain>Canton-S</strain>
    </source>
</reference>
<reference key="3">
    <citation type="journal article" date="2000" name="Science">
        <title>The genome sequence of Drosophila melanogaster.</title>
        <authorList>
            <person name="Adams M.D."/>
            <person name="Celniker S.E."/>
            <person name="Holt R.A."/>
            <person name="Evans C.A."/>
            <person name="Gocayne J.D."/>
            <person name="Amanatides P.G."/>
            <person name="Scherer S.E."/>
            <person name="Li P.W."/>
            <person name="Hoskins R.A."/>
            <person name="Galle R.F."/>
            <person name="George R.A."/>
            <person name="Lewis S.E."/>
            <person name="Richards S."/>
            <person name="Ashburner M."/>
            <person name="Henderson S.N."/>
            <person name="Sutton G.G."/>
            <person name="Wortman J.R."/>
            <person name="Yandell M.D."/>
            <person name="Zhang Q."/>
            <person name="Chen L.X."/>
            <person name="Brandon R.C."/>
            <person name="Rogers Y.-H.C."/>
            <person name="Blazej R.G."/>
            <person name="Champe M."/>
            <person name="Pfeiffer B.D."/>
            <person name="Wan K.H."/>
            <person name="Doyle C."/>
            <person name="Baxter E.G."/>
            <person name="Helt G."/>
            <person name="Nelson C.R."/>
            <person name="Miklos G.L.G."/>
            <person name="Abril J.F."/>
            <person name="Agbayani A."/>
            <person name="An H.-J."/>
            <person name="Andrews-Pfannkoch C."/>
            <person name="Baldwin D."/>
            <person name="Ballew R.M."/>
            <person name="Basu A."/>
            <person name="Baxendale J."/>
            <person name="Bayraktaroglu L."/>
            <person name="Beasley E.M."/>
            <person name="Beeson K.Y."/>
            <person name="Benos P.V."/>
            <person name="Berman B.P."/>
            <person name="Bhandari D."/>
            <person name="Bolshakov S."/>
            <person name="Borkova D."/>
            <person name="Botchan M.R."/>
            <person name="Bouck J."/>
            <person name="Brokstein P."/>
            <person name="Brottier P."/>
            <person name="Burtis K.C."/>
            <person name="Busam D.A."/>
            <person name="Butler H."/>
            <person name="Cadieu E."/>
            <person name="Center A."/>
            <person name="Chandra I."/>
            <person name="Cherry J.M."/>
            <person name="Cawley S."/>
            <person name="Dahlke C."/>
            <person name="Davenport L.B."/>
            <person name="Davies P."/>
            <person name="de Pablos B."/>
            <person name="Delcher A."/>
            <person name="Deng Z."/>
            <person name="Mays A.D."/>
            <person name="Dew I."/>
            <person name="Dietz S.M."/>
            <person name="Dodson K."/>
            <person name="Doup L.E."/>
            <person name="Downes M."/>
            <person name="Dugan-Rocha S."/>
            <person name="Dunkov B.C."/>
            <person name="Dunn P."/>
            <person name="Durbin K.J."/>
            <person name="Evangelista C.C."/>
            <person name="Ferraz C."/>
            <person name="Ferriera S."/>
            <person name="Fleischmann W."/>
            <person name="Fosler C."/>
            <person name="Gabrielian A.E."/>
            <person name="Garg N.S."/>
            <person name="Gelbart W.M."/>
            <person name="Glasser K."/>
            <person name="Glodek A."/>
            <person name="Gong F."/>
            <person name="Gorrell J.H."/>
            <person name="Gu Z."/>
            <person name="Guan P."/>
            <person name="Harris M."/>
            <person name="Harris N.L."/>
            <person name="Harvey D.A."/>
            <person name="Heiman T.J."/>
            <person name="Hernandez J.R."/>
            <person name="Houck J."/>
            <person name="Hostin D."/>
            <person name="Houston K.A."/>
            <person name="Howland T.J."/>
            <person name="Wei M.-H."/>
            <person name="Ibegwam C."/>
            <person name="Jalali M."/>
            <person name="Kalush F."/>
            <person name="Karpen G.H."/>
            <person name="Ke Z."/>
            <person name="Kennison J.A."/>
            <person name="Ketchum K.A."/>
            <person name="Kimmel B.E."/>
            <person name="Kodira C.D."/>
            <person name="Kraft C.L."/>
            <person name="Kravitz S."/>
            <person name="Kulp D."/>
            <person name="Lai Z."/>
            <person name="Lasko P."/>
            <person name="Lei Y."/>
            <person name="Levitsky A.A."/>
            <person name="Li J.H."/>
            <person name="Li Z."/>
            <person name="Liang Y."/>
            <person name="Lin X."/>
            <person name="Liu X."/>
            <person name="Mattei B."/>
            <person name="McIntosh T.C."/>
            <person name="McLeod M.P."/>
            <person name="McPherson D."/>
            <person name="Merkulov G."/>
            <person name="Milshina N.V."/>
            <person name="Mobarry C."/>
            <person name="Morris J."/>
            <person name="Moshrefi A."/>
            <person name="Mount S.M."/>
            <person name="Moy M."/>
            <person name="Murphy B."/>
            <person name="Murphy L."/>
            <person name="Muzny D.M."/>
            <person name="Nelson D.L."/>
            <person name="Nelson D.R."/>
            <person name="Nelson K.A."/>
            <person name="Nixon K."/>
            <person name="Nusskern D.R."/>
            <person name="Pacleb J.M."/>
            <person name="Palazzolo M."/>
            <person name="Pittman G.S."/>
            <person name="Pan S."/>
            <person name="Pollard J."/>
            <person name="Puri V."/>
            <person name="Reese M.G."/>
            <person name="Reinert K."/>
            <person name="Remington K."/>
            <person name="Saunders R.D.C."/>
            <person name="Scheeler F."/>
            <person name="Shen H."/>
            <person name="Shue B.C."/>
            <person name="Siden-Kiamos I."/>
            <person name="Simpson M."/>
            <person name="Skupski M.P."/>
            <person name="Smith T.J."/>
            <person name="Spier E."/>
            <person name="Spradling A.C."/>
            <person name="Stapleton M."/>
            <person name="Strong R."/>
            <person name="Sun E."/>
            <person name="Svirskas R."/>
            <person name="Tector C."/>
            <person name="Turner R."/>
            <person name="Venter E."/>
            <person name="Wang A.H."/>
            <person name="Wang X."/>
            <person name="Wang Z.-Y."/>
            <person name="Wassarman D.A."/>
            <person name="Weinstock G.M."/>
            <person name="Weissenbach J."/>
            <person name="Williams S.M."/>
            <person name="Woodage T."/>
            <person name="Worley K.C."/>
            <person name="Wu D."/>
            <person name="Yang S."/>
            <person name="Yao Q.A."/>
            <person name="Ye J."/>
            <person name="Yeh R.-F."/>
            <person name="Zaveri J.S."/>
            <person name="Zhan M."/>
            <person name="Zhang G."/>
            <person name="Zhao Q."/>
            <person name="Zheng L."/>
            <person name="Zheng X.H."/>
            <person name="Zhong F.N."/>
            <person name="Zhong W."/>
            <person name="Zhou X."/>
            <person name="Zhu S.C."/>
            <person name="Zhu X."/>
            <person name="Smith H.O."/>
            <person name="Gibbs R.A."/>
            <person name="Myers E.W."/>
            <person name="Rubin G.M."/>
            <person name="Venter J.C."/>
        </authorList>
    </citation>
    <scope>NUCLEOTIDE SEQUENCE [LARGE SCALE GENOMIC DNA]</scope>
    <source>
        <strain>Berkeley</strain>
    </source>
</reference>
<reference key="4">
    <citation type="journal article" date="2002" name="Genome Biol.">
        <title>Annotation of the Drosophila melanogaster euchromatic genome: a systematic review.</title>
        <authorList>
            <person name="Misra S."/>
            <person name="Crosby M.A."/>
            <person name="Mungall C.J."/>
            <person name="Matthews B.B."/>
            <person name="Campbell K.S."/>
            <person name="Hradecky P."/>
            <person name="Huang Y."/>
            <person name="Kaminker J.S."/>
            <person name="Millburn G.H."/>
            <person name="Prochnik S.E."/>
            <person name="Smith C.D."/>
            <person name="Tupy J.L."/>
            <person name="Whitfield E.J."/>
            <person name="Bayraktaroglu L."/>
            <person name="Berman B.P."/>
            <person name="Bettencourt B.R."/>
            <person name="Celniker S.E."/>
            <person name="de Grey A.D.N.J."/>
            <person name="Drysdale R.A."/>
            <person name="Harris N.L."/>
            <person name="Richter J."/>
            <person name="Russo S."/>
            <person name="Schroeder A.J."/>
            <person name="Shu S.Q."/>
            <person name="Stapleton M."/>
            <person name="Yamada C."/>
            <person name="Ashburner M."/>
            <person name="Gelbart W.M."/>
            <person name="Rubin G.M."/>
            <person name="Lewis S.E."/>
        </authorList>
    </citation>
    <scope>GENOME REANNOTATION</scope>
    <source>
        <strain>Berkeley</strain>
    </source>
</reference>
<reference key="5">
    <citation type="submission" date="2004-04" db="EMBL/GenBank/DDBJ databases">
        <authorList>
            <person name="Stapleton M."/>
            <person name="Carlson J.W."/>
            <person name="Chavez C."/>
            <person name="Frise E."/>
            <person name="George R.A."/>
            <person name="Pacleb J.M."/>
            <person name="Park S."/>
            <person name="Wan K.H."/>
            <person name="Yu C."/>
            <person name="Rubin G.M."/>
            <person name="Celniker S.E."/>
        </authorList>
    </citation>
    <scope>NUCLEOTIDE SEQUENCE [LARGE SCALE MRNA]</scope>
    <source>
        <strain>Berkeley</strain>
        <tissue>Head</tissue>
    </source>
</reference>
<reference key="6">
    <citation type="journal article" date="2020" name="Nature">
        <title>An intestinal zinc sensor regulates food intake and developmental growth.</title>
        <authorList>
            <person name="Redhai S."/>
            <person name="Pilgrim C."/>
            <person name="Gaspar P."/>
            <person name="Giesen L.V."/>
            <person name="Lopes T."/>
            <person name="Riabinina O."/>
            <person name="Grenier T."/>
            <person name="Milona A."/>
            <person name="Chanana B."/>
            <person name="Swadling J.B."/>
            <person name="Wang Y.F."/>
            <person name="Dahalan F."/>
            <person name="Yuan M."/>
            <person name="Wilsch-Brauninger M."/>
            <person name="Lin W.H."/>
            <person name="Dennison N."/>
            <person name="Capriotti P."/>
            <person name="Lawniczak M.K.N."/>
            <person name="Baines R.A."/>
            <person name="Warnecke T."/>
            <person name="Windbichler N."/>
            <person name="Leulier F."/>
            <person name="Bellono N.W."/>
            <person name="Miguel-Aliaga I."/>
        </authorList>
    </citation>
    <scope>FUNCTION</scope>
    <scope>TISSUE SPECIFICITY</scope>
    <scope>DISRUPTION PHENOTYPE</scope>
</reference>
<gene>
    <name type="primary">Vha16-1</name>
    <name type="synonym">VHA</name>
    <name type="synonym">Vha16</name>
    <name type="ORF">CG3161</name>
</gene>
<evidence type="ECO:0000250" key="1">
    <source>
        <dbReference type="UniProtKB" id="P27449"/>
    </source>
</evidence>
<evidence type="ECO:0000250" key="2">
    <source>
        <dbReference type="UniProtKB" id="P63081"/>
    </source>
</evidence>
<evidence type="ECO:0000255" key="3"/>
<evidence type="ECO:0000269" key="4">
    <source>
    </source>
</evidence>
<evidence type="ECO:0000305" key="5"/>
<dbReference type="EMBL" id="X55979">
    <property type="protein sequence ID" value="CAA39449.1"/>
    <property type="molecule type" value="mRNA"/>
</dbReference>
<dbReference type="EMBL" id="X77936">
    <property type="protein sequence ID" value="CAA54908.1"/>
    <property type="molecule type" value="Genomic_DNA"/>
</dbReference>
<dbReference type="EMBL" id="AE013599">
    <property type="protein sequence ID" value="AAF57359.1"/>
    <property type="molecule type" value="Genomic_DNA"/>
</dbReference>
<dbReference type="EMBL" id="AE013599">
    <property type="protein sequence ID" value="AAF57360.1"/>
    <property type="molecule type" value="Genomic_DNA"/>
</dbReference>
<dbReference type="EMBL" id="AE013599">
    <property type="protein sequence ID" value="AAM68381.1"/>
    <property type="molecule type" value="Genomic_DNA"/>
</dbReference>
<dbReference type="EMBL" id="BT012440">
    <property type="protein sequence ID" value="AAS93711.1"/>
    <property type="molecule type" value="mRNA"/>
</dbReference>
<dbReference type="PIR" id="S42878">
    <property type="entry name" value="S42878"/>
</dbReference>
<dbReference type="RefSeq" id="NP_476801.1">
    <property type="nucleotide sequence ID" value="NM_057453.5"/>
</dbReference>
<dbReference type="RefSeq" id="NP_724474.1">
    <property type="nucleotide sequence ID" value="NM_165474.3"/>
</dbReference>
<dbReference type="RefSeq" id="NP_724475.1">
    <property type="nucleotide sequence ID" value="NM_165475.3"/>
</dbReference>
<dbReference type="RefSeq" id="NP_724476.1">
    <property type="nucleotide sequence ID" value="NM_165476.3"/>
</dbReference>
<dbReference type="SMR" id="P23380"/>
<dbReference type="BioGRID" id="68967">
    <property type="interactions" value="41"/>
</dbReference>
<dbReference type="DIP" id="DIP-19390N"/>
<dbReference type="FunCoup" id="P23380">
    <property type="interactions" value="1320"/>
</dbReference>
<dbReference type="IntAct" id="P23380">
    <property type="interactions" value="182"/>
</dbReference>
<dbReference type="STRING" id="7227.FBpp0085485"/>
<dbReference type="TCDB" id="1.A.137.1.1">
    <property type="family name" value="1,a,137, the ductin channel complex (ductin) family"/>
</dbReference>
<dbReference type="PaxDb" id="7227-FBpp0085483"/>
<dbReference type="DNASU" id="44307"/>
<dbReference type="EnsemblMetazoa" id="FBtr0086150">
    <property type="protein sequence ID" value="FBpp0085483"/>
    <property type="gene ID" value="FBgn0262736"/>
</dbReference>
<dbReference type="EnsemblMetazoa" id="FBtr0086151">
    <property type="protein sequence ID" value="FBpp0085484"/>
    <property type="gene ID" value="FBgn0262736"/>
</dbReference>
<dbReference type="EnsemblMetazoa" id="FBtr0086152">
    <property type="protein sequence ID" value="FBpp0085485"/>
    <property type="gene ID" value="FBgn0262736"/>
</dbReference>
<dbReference type="EnsemblMetazoa" id="FBtr0086153">
    <property type="protein sequence ID" value="FBpp0085486"/>
    <property type="gene ID" value="FBgn0262736"/>
</dbReference>
<dbReference type="GeneID" id="44307"/>
<dbReference type="KEGG" id="dme:Dmel_CG3161"/>
<dbReference type="AGR" id="FB:FBgn0262736"/>
<dbReference type="CTD" id="44307"/>
<dbReference type="FlyBase" id="FBgn0262736">
    <property type="gene designation" value="Vha16-1"/>
</dbReference>
<dbReference type="VEuPathDB" id="VectorBase:FBgn0262736"/>
<dbReference type="eggNOG" id="KOG0232">
    <property type="taxonomic scope" value="Eukaryota"/>
</dbReference>
<dbReference type="GeneTree" id="ENSGT00550000074873"/>
<dbReference type="HOGENOM" id="CLU_085752_1_2_1"/>
<dbReference type="InParanoid" id="P23380"/>
<dbReference type="OMA" id="MGVMKPD"/>
<dbReference type="OrthoDB" id="1744869at2759"/>
<dbReference type="PhylomeDB" id="P23380"/>
<dbReference type="Reactome" id="R-DME-1222556">
    <property type="pathway name" value="ROS and RNS production in phagocytes"/>
</dbReference>
<dbReference type="Reactome" id="R-DME-6798695">
    <property type="pathway name" value="Neutrophil degranulation"/>
</dbReference>
<dbReference type="Reactome" id="R-DME-77387">
    <property type="pathway name" value="Insulin receptor recycling"/>
</dbReference>
<dbReference type="Reactome" id="R-DME-917977">
    <property type="pathway name" value="Transferrin endocytosis and recycling"/>
</dbReference>
<dbReference type="Reactome" id="R-DME-9639288">
    <property type="pathway name" value="Amino acids regulate mTORC1"/>
</dbReference>
<dbReference type="Reactome" id="R-DME-983712">
    <property type="pathway name" value="Ion channel transport"/>
</dbReference>
<dbReference type="BioGRID-ORCS" id="44307">
    <property type="hits" value="1 hit in 1 CRISPR screen"/>
</dbReference>
<dbReference type="ChiTaRS" id="Vha16-1">
    <property type="organism name" value="fly"/>
</dbReference>
<dbReference type="GenomeRNAi" id="44307"/>
<dbReference type="PRO" id="PR:P23380"/>
<dbReference type="Proteomes" id="UP000000803">
    <property type="component" value="Chromosome 2R"/>
</dbReference>
<dbReference type="Bgee" id="FBgn0262736">
    <property type="expression patterns" value="Expressed in adult hindgut (Drosophila) and 285 other cell types or tissues"/>
</dbReference>
<dbReference type="ExpressionAtlas" id="P23380">
    <property type="expression patterns" value="baseline and differential"/>
</dbReference>
<dbReference type="GO" id="GO:0045169">
    <property type="term" value="C:fusome"/>
    <property type="evidence" value="ECO:0000314"/>
    <property type="project" value="FlyBase"/>
</dbReference>
<dbReference type="GO" id="GO:0016020">
    <property type="term" value="C:membrane"/>
    <property type="evidence" value="ECO:0000318"/>
    <property type="project" value="GO_Central"/>
</dbReference>
<dbReference type="GO" id="GO:0033181">
    <property type="term" value="C:plasma membrane proton-transporting V-type ATPase complex"/>
    <property type="evidence" value="ECO:0000315"/>
    <property type="project" value="FlyBase"/>
</dbReference>
<dbReference type="GO" id="GO:0000220">
    <property type="term" value="C:vacuolar proton-transporting V-type ATPase, V0 domain"/>
    <property type="evidence" value="ECO:0000250"/>
    <property type="project" value="FlyBase"/>
</dbReference>
<dbReference type="GO" id="GO:0046961">
    <property type="term" value="F:proton-transporting ATPase activity, rotational mechanism"/>
    <property type="evidence" value="ECO:0007669"/>
    <property type="project" value="InterPro"/>
</dbReference>
<dbReference type="GO" id="GO:1902600">
    <property type="term" value="P:proton transmembrane transport"/>
    <property type="evidence" value="ECO:0000305"/>
    <property type="project" value="FlyBase"/>
</dbReference>
<dbReference type="GO" id="GO:0007035">
    <property type="term" value="P:vacuolar acidification"/>
    <property type="evidence" value="ECO:0000315"/>
    <property type="project" value="UniProtKB"/>
</dbReference>
<dbReference type="CDD" id="cd18175">
    <property type="entry name" value="ATP-synt_Vo_c_ATP6C_rpt1"/>
    <property type="match status" value="1"/>
</dbReference>
<dbReference type="CDD" id="cd18176">
    <property type="entry name" value="ATP-synt_Vo_c_ATP6C_rpt2"/>
    <property type="match status" value="1"/>
</dbReference>
<dbReference type="FunFam" id="1.20.120.610:FF:000001">
    <property type="entry name" value="V-type proton ATPase proteolipid subunit"/>
    <property type="match status" value="1"/>
</dbReference>
<dbReference type="Gene3D" id="1.20.120.610">
    <property type="entry name" value="lithium bound rotor ring of v- atpase"/>
    <property type="match status" value="1"/>
</dbReference>
<dbReference type="InterPro" id="IPR002379">
    <property type="entry name" value="ATPase_proteolipid_c-like_dom"/>
</dbReference>
<dbReference type="InterPro" id="IPR000245">
    <property type="entry name" value="ATPase_proteolipid_csu"/>
</dbReference>
<dbReference type="InterPro" id="IPR011555">
    <property type="entry name" value="ATPase_proteolipid_su_C_euk"/>
</dbReference>
<dbReference type="InterPro" id="IPR035921">
    <property type="entry name" value="F/V-ATP_Csub_sf"/>
</dbReference>
<dbReference type="NCBIfam" id="TIGR01100">
    <property type="entry name" value="V_ATP_synt_C"/>
    <property type="match status" value="1"/>
</dbReference>
<dbReference type="PANTHER" id="PTHR10263">
    <property type="entry name" value="V-TYPE PROTON ATPASE PROTEOLIPID SUBUNIT"/>
    <property type="match status" value="1"/>
</dbReference>
<dbReference type="Pfam" id="PF00137">
    <property type="entry name" value="ATP-synt_C"/>
    <property type="match status" value="2"/>
</dbReference>
<dbReference type="PRINTS" id="PR00122">
    <property type="entry name" value="VACATPASE"/>
</dbReference>
<dbReference type="SUPFAM" id="SSF81333">
    <property type="entry name" value="F1F0 ATP synthase subunit C"/>
    <property type="match status" value="2"/>
</dbReference>
<name>VATL_DROME</name>
<protein>
    <recommendedName>
        <fullName evidence="5">V-type proton ATPase 16 kDa proteolipid subunit c</fullName>
        <shortName evidence="5">V-ATPase 16 kDa proteolipid subunit c</shortName>
        <shortName>VHA16K</shortName>
    </recommendedName>
    <alternativeName>
        <fullName>Ductin</fullName>
    </alternativeName>
    <alternativeName>
        <fullName>Vacuolar H+ ATPase subunit 16-1</fullName>
    </alternativeName>
    <alternativeName>
        <fullName evidence="5">Vacuolar proton pump 16 kDa proteolipid subunit c</fullName>
    </alternativeName>
</protein>
<sequence length="159" mass="16267">MSSEVSSDNPIYGPFFGVMGAASAIIFSALGAAYGTAKSGTGIAAMSVMRPELIMKSIIPVVMAGIIAIYGLVVAVLIAGALEEPSKYSLYRGFIHLGAGLAVGFSGLAAGFAIGIVGDAGVRGTAQQPRLFVGMILILIFAEVLGLYGLIVAIYLYTK</sequence>
<accession>P23380</accession>
<accession>A4UZ55</accession>
<accession>Q0E9N6</accession>
<accession>Q53XD4</accession>
<accession>Q9V9D2</accession>
<proteinExistence type="evidence at transcript level"/>
<keyword id="KW-0375">Hydrogen ion transport</keyword>
<keyword id="KW-0406">Ion transport</keyword>
<keyword id="KW-0472">Membrane</keyword>
<keyword id="KW-1185">Reference proteome</keyword>
<keyword id="KW-0812">Transmembrane</keyword>
<keyword id="KW-1133">Transmembrane helix</keyword>
<keyword id="KW-0813">Transport</keyword>